<comment type="function">
    <text evidence="1">Catalyzes the conversion of glucosamine-6-phosphate to glucosamine-1-phosphate.</text>
</comment>
<comment type="catalytic activity">
    <reaction evidence="1">
        <text>alpha-D-glucosamine 1-phosphate = D-glucosamine 6-phosphate</text>
        <dbReference type="Rhea" id="RHEA:23424"/>
        <dbReference type="ChEBI" id="CHEBI:58516"/>
        <dbReference type="ChEBI" id="CHEBI:58725"/>
        <dbReference type="EC" id="5.4.2.10"/>
    </reaction>
</comment>
<comment type="cofactor">
    <cofactor evidence="1">
        <name>Mg(2+)</name>
        <dbReference type="ChEBI" id="CHEBI:18420"/>
    </cofactor>
    <text evidence="1">Binds 1 Mg(2+) ion per subunit.</text>
</comment>
<comment type="PTM">
    <text evidence="1">Activated by phosphorylation.</text>
</comment>
<comment type="similarity">
    <text evidence="1">Belongs to the phosphohexose mutase family.</text>
</comment>
<dbReference type="EC" id="5.4.2.10" evidence="1"/>
<dbReference type="EMBL" id="BX640429">
    <property type="protein sequence ID" value="CAE37369.1"/>
    <property type="molecule type" value="Genomic_DNA"/>
</dbReference>
<dbReference type="RefSeq" id="WP_003809628.1">
    <property type="nucleotide sequence ID" value="NC_002928.3"/>
</dbReference>
<dbReference type="SMR" id="Q7W8R3"/>
<dbReference type="DNASU" id="1666808"/>
<dbReference type="GeneID" id="93203843"/>
<dbReference type="KEGG" id="bpa:BPP2069"/>
<dbReference type="HOGENOM" id="CLU_016950_7_0_4"/>
<dbReference type="Proteomes" id="UP000001421">
    <property type="component" value="Chromosome"/>
</dbReference>
<dbReference type="GO" id="GO:0005829">
    <property type="term" value="C:cytosol"/>
    <property type="evidence" value="ECO:0007669"/>
    <property type="project" value="TreeGrafter"/>
</dbReference>
<dbReference type="GO" id="GO:0000287">
    <property type="term" value="F:magnesium ion binding"/>
    <property type="evidence" value="ECO:0007669"/>
    <property type="project" value="UniProtKB-UniRule"/>
</dbReference>
<dbReference type="GO" id="GO:0008966">
    <property type="term" value="F:phosphoglucosamine mutase activity"/>
    <property type="evidence" value="ECO:0007669"/>
    <property type="project" value="UniProtKB-UniRule"/>
</dbReference>
<dbReference type="GO" id="GO:0004615">
    <property type="term" value="F:phosphomannomutase activity"/>
    <property type="evidence" value="ECO:0007669"/>
    <property type="project" value="TreeGrafter"/>
</dbReference>
<dbReference type="GO" id="GO:0005975">
    <property type="term" value="P:carbohydrate metabolic process"/>
    <property type="evidence" value="ECO:0007669"/>
    <property type="project" value="InterPro"/>
</dbReference>
<dbReference type="GO" id="GO:0009252">
    <property type="term" value="P:peptidoglycan biosynthetic process"/>
    <property type="evidence" value="ECO:0007669"/>
    <property type="project" value="TreeGrafter"/>
</dbReference>
<dbReference type="GO" id="GO:0006048">
    <property type="term" value="P:UDP-N-acetylglucosamine biosynthetic process"/>
    <property type="evidence" value="ECO:0007669"/>
    <property type="project" value="TreeGrafter"/>
</dbReference>
<dbReference type="CDD" id="cd05802">
    <property type="entry name" value="GlmM"/>
    <property type="match status" value="1"/>
</dbReference>
<dbReference type="FunFam" id="3.40.120.10:FF:000001">
    <property type="entry name" value="Phosphoglucosamine mutase"/>
    <property type="match status" value="1"/>
</dbReference>
<dbReference type="FunFam" id="3.40.120.10:FF:000003">
    <property type="entry name" value="Phosphoglucosamine mutase"/>
    <property type="match status" value="1"/>
</dbReference>
<dbReference type="Gene3D" id="3.40.120.10">
    <property type="entry name" value="Alpha-D-Glucose-1,6-Bisphosphate, subunit A, domain 3"/>
    <property type="match status" value="3"/>
</dbReference>
<dbReference type="Gene3D" id="3.30.310.50">
    <property type="entry name" value="Alpha-D-phosphohexomutase, C-terminal domain"/>
    <property type="match status" value="1"/>
</dbReference>
<dbReference type="HAMAP" id="MF_01554_B">
    <property type="entry name" value="GlmM_B"/>
    <property type="match status" value="1"/>
</dbReference>
<dbReference type="InterPro" id="IPR005844">
    <property type="entry name" value="A-D-PHexomutase_a/b/a-I"/>
</dbReference>
<dbReference type="InterPro" id="IPR016055">
    <property type="entry name" value="A-D-PHexomutase_a/b/a-I/II/III"/>
</dbReference>
<dbReference type="InterPro" id="IPR005845">
    <property type="entry name" value="A-D-PHexomutase_a/b/a-II"/>
</dbReference>
<dbReference type="InterPro" id="IPR005846">
    <property type="entry name" value="A-D-PHexomutase_a/b/a-III"/>
</dbReference>
<dbReference type="InterPro" id="IPR005843">
    <property type="entry name" value="A-D-PHexomutase_C"/>
</dbReference>
<dbReference type="InterPro" id="IPR036900">
    <property type="entry name" value="A-D-PHexomutase_C_sf"/>
</dbReference>
<dbReference type="InterPro" id="IPR016066">
    <property type="entry name" value="A-D-PHexomutase_CS"/>
</dbReference>
<dbReference type="InterPro" id="IPR005841">
    <property type="entry name" value="Alpha-D-phosphohexomutase_SF"/>
</dbReference>
<dbReference type="InterPro" id="IPR006352">
    <property type="entry name" value="GlmM_bact"/>
</dbReference>
<dbReference type="InterPro" id="IPR050060">
    <property type="entry name" value="Phosphoglucosamine_mutase"/>
</dbReference>
<dbReference type="NCBIfam" id="TIGR01455">
    <property type="entry name" value="glmM"/>
    <property type="match status" value="1"/>
</dbReference>
<dbReference type="NCBIfam" id="NF008139">
    <property type="entry name" value="PRK10887.1"/>
    <property type="match status" value="1"/>
</dbReference>
<dbReference type="PANTHER" id="PTHR42946:SF1">
    <property type="entry name" value="PHOSPHOGLUCOMUTASE (ALPHA-D-GLUCOSE-1,6-BISPHOSPHATE-DEPENDENT)"/>
    <property type="match status" value="1"/>
</dbReference>
<dbReference type="PANTHER" id="PTHR42946">
    <property type="entry name" value="PHOSPHOHEXOSE MUTASE"/>
    <property type="match status" value="1"/>
</dbReference>
<dbReference type="Pfam" id="PF02878">
    <property type="entry name" value="PGM_PMM_I"/>
    <property type="match status" value="1"/>
</dbReference>
<dbReference type="Pfam" id="PF02879">
    <property type="entry name" value="PGM_PMM_II"/>
    <property type="match status" value="1"/>
</dbReference>
<dbReference type="Pfam" id="PF02880">
    <property type="entry name" value="PGM_PMM_III"/>
    <property type="match status" value="1"/>
</dbReference>
<dbReference type="Pfam" id="PF00408">
    <property type="entry name" value="PGM_PMM_IV"/>
    <property type="match status" value="1"/>
</dbReference>
<dbReference type="PRINTS" id="PR00509">
    <property type="entry name" value="PGMPMM"/>
</dbReference>
<dbReference type="SUPFAM" id="SSF55957">
    <property type="entry name" value="Phosphoglucomutase, C-terminal domain"/>
    <property type="match status" value="1"/>
</dbReference>
<dbReference type="SUPFAM" id="SSF53738">
    <property type="entry name" value="Phosphoglucomutase, first 3 domains"/>
    <property type="match status" value="3"/>
</dbReference>
<dbReference type="PROSITE" id="PS00710">
    <property type="entry name" value="PGM_PMM"/>
    <property type="match status" value="1"/>
</dbReference>
<keyword id="KW-0413">Isomerase</keyword>
<keyword id="KW-0460">Magnesium</keyword>
<keyword id="KW-0479">Metal-binding</keyword>
<keyword id="KW-0597">Phosphoprotein</keyword>
<sequence length="452" mass="48300">MSQRKYFGTDGVRGEVGGPVINAAFALRLGYAAGRVLAREHREHASGRGRNRPQVVIGKDTRISGYMLESALEAGLSAAGIDVLLAGPVPTPAVAYLTRTLRLAAGIVISASHNPYQDNGIKFFSAHGMKLPDDIEAAIEQALDEPLGCVGSEELGRARRMADAQGRYIEFCKSTFPHDLDLNGLKLVVDAAHGAAYNVAPHVFRELGAEVHAIGVSPDGFNINKGVGALHPESLAEEVRARGADLGIALDGDADRLQMVDGTGRIYNGDELLYAIVRERMQRGPVAGVVGTLMTNYGLERQLQQIGVGFERANVGDRYVLEQMQARGWLYGGESSGHLLCLDCHTTGDGTIAALQVLTALRRADATLAEWVADLRMYPQKMINVPLAPGLDWKTHDGLARARGAVEAELAGRGRVLIRASGTEPKLRLMVEAEDEALAQASAQKLADSLGA</sequence>
<reference key="1">
    <citation type="journal article" date="2003" name="Nat. Genet.">
        <title>Comparative analysis of the genome sequences of Bordetella pertussis, Bordetella parapertussis and Bordetella bronchiseptica.</title>
        <authorList>
            <person name="Parkhill J."/>
            <person name="Sebaihia M."/>
            <person name="Preston A."/>
            <person name="Murphy L.D."/>
            <person name="Thomson N.R."/>
            <person name="Harris D.E."/>
            <person name="Holden M.T.G."/>
            <person name="Churcher C.M."/>
            <person name="Bentley S.D."/>
            <person name="Mungall K.L."/>
            <person name="Cerdeno-Tarraga A.-M."/>
            <person name="Temple L."/>
            <person name="James K.D."/>
            <person name="Harris B."/>
            <person name="Quail M.A."/>
            <person name="Achtman M."/>
            <person name="Atkin R."/>
            <person name="Baker S."/>
            <person name="Basham D."/>
            <person name="Bason N."/>
            <person name="Cherevach I."/>
            <person name="Chillingworth T."/>
            <person name="Collins M."/>
            <person name="Cronin A."/>
            <person name="Davis P."/>
            <person name="Doggett J."/>
            <person name="Feltwell T."/>
            <person name="Goble A."/>
            <person name="Hamlin N."/>
            <person name="Hauser H."/>
            <person name="Holroyd S."/>
            <person name="Jagels K."/>
            <person name="Leather S."/>
            <person name="Moule S."/>
            <person name="Norberczak H."/>
            <person name="O'Neil S."/>
            <person name="Ormond D."/>
            <person name="Price C."/>
            <person name="Rabbinowitsch E."/>
            <person name="Rutter S."/>
            <person name="Sanders M."/>
            <person name="Saunders D."/>
            <person name="Seeger K."/>
            <person name="Sharp S."/>
            <person name="Simmonds M."/>
            <person name="Skelton J."/>
            <person name="Squares R."/>
            <person name="Squares S."/>
            <person name="Stevens K."/>
            <person name="Unwin L."/>
            <person name="Whitehead S."/>
            <person name="Barrell B.G."/>
            <person name="Maskell D.J."/>
        </authorList>
    </citation>
    <scope>NUCLEOTIDE SEQUENCE [LARGE SCALE GENOMIC DNA]</scope>
    <source>
        <strain>12822 / ATCC BAA-587 / NCTC 13253</strain>
    </source>
</reference>
<proteinExistence type="inferred from homology"/>
<organism>
    <name type="scientific">Bordetella parapertussis (strain 12822 / ATCC BAA-587 / NCTC 13253)</name>
    <dbReference type="NCBI Taxonomy" id="257311"/>
    <lineage>
        <taxon>Bacteria</taxon>
        <taxon>Pseudomonadati</taxon>
        <taxon>Pseudomonadota</taxon>
        <taxon>Betaproteobacteria</taxon>
        <taxon>Burkholderiales</taxon>
        <taxon>Alcaligenaceae</taxon>
        <taxon>Bordetella</taxon>
    </lineage>
</organism>
<gene>
    <name evidence="1" type="primary">glmM</name>
    <name type="ordered locus">BPP2069</name>
</gene>
<name>GLMM_BORPA</name>
<protein>
    <recommendedName>
        <fullName evidence="1">Phosphoglucosamine mutase</fullName>
        <ecNumber evidence="1">5.4.2.10</ecNumber>
    </recommendedName>
</protein>
<evidence type="ECO:0000255" key="1">
    <source>
        <dbReference type="HAMAP-Rule" id="MF_01554"/>
    </source>
</evidence>
<accession>Q7W8R3</accession>
<feature type="chain" id="PRO_0000147855" description="Phosphoglucosamine mutase">
    <location>
        <begin position="1"/>
        <end position="452"/>
    </location>
</feature>
<feature type="active site" description="Phosphoserine intermediate" evidence="1">
    <location>
        <position position="112"/>
    </location>
</feature>
<feature type="binding site" description="via phosphate group" evidence="1">
    <location>
        <position position="112"/>
    </location>
    <ligand>
        <name>Mg(2+)</name>
        <dbReference type="ChEBI" id="CHEBI:18420"/>
    </ligand>
</feature>
<feature type="binding site" evidence="1">
    <location>
        <position position="251"/>
    </location>
    <ligand>
        <name>Mg(2+)</name>
        <dbReference type="ChEBI" id="CHEBI:18420"/>
    </ligand>
</feature>
<feature type="binding site" evidence="1">
    <location>
        <position position="253"/>
    </location>
    <ligand>
        <name>Mg(2+)</name>
        <dbReference type="ChEBI" id="CHEBI:18420"/>
    </ligand>
</feature>
<feature type="binding site" evidence="1">
    <location>
        <position position="255"/>
    </location>
    <ligand>
        <name>Mg(2+)</name>
        <dbReference type="ChEBI" id="CHEBI:18420"/>
    </ligand>
</feature>
<feature type="modified residue" description="Phosphoserine" evidence="1">
    <location>
        <position position="112"/>
    </location>
</feature>